<dbReference type="EC" id="2.7.11.33" evidence="1"/>
<dbReference type="EC" id="2.7.4.28" evidence="1"/>
<dbReference type="EMBL" id="AL590842">
    <property type="protein sequence ID" value="CAL21038.1"/>
    <property type="molecule type" value="Genomic_DNA"/>
</dbReference>
<dbReference type="EMBL" id="AE009952">
    <property type="protein sequence ID" value="AAM85495.1"/>
    <property type="molecule type" value="Genomic_DNA"/>
</dbReference>
<dbReference type="EMBL" id="AE017042">
    <property type="protein sequence ID" value="AAS62404.1"/>
    <property type="molecule type" value="Genomic_DNA"/>
</dbReference>
<dbReference type="PIR" id="AC0294">
    <property type="entry name" value="AC0294"/>
</dbReference>
<dbReference type="RefSeq" id="WP_002211814.1">
    <property type="nucleotide sequence ID" value="NZ_WUCL01000026.1"/>
</dbReference>
<dbReference type="RefSeq" id="YP_002347375.1">
    <property type="nucleotide sequence ID" value="NC_003143.1"/>
</dbReference>
<dbReference type="SMR" id="Q8ZDY4"/>
<dbReference type="STRING" id="214092.YPO2410"/>
<dbReference type="PaxDb" id="214092-YPO2410"/>
<dbReference type="DNASU" id="1146876"/>
<dbReference type="EnsemblBacteria" id="AAS62404">
    <property type="protein sequence ID" value="AAS62404"/>
    <property type="gene ID" value="YP_2197"/>
</dbReference>
<dbReference type="KEGG" id="ype:YPO2410"/>
<dbReference type="KEGG" id="ypk:y1929"/>
<dbReference type="KEGG" id="ypm:YP_2197"/>
<dbReference type="PATRIC" id="fig|214092.21.peg.2817"/>
<dbReference type="eggNOG" id="COG1806">
    <property type="taxonomic scope" value="Bacteria"/>
</dbReference>
<dbReference type="HOGENOM" id="CLU_046206_1_0_6"/>
<dbReference type="OMA" id="YAQCEFE"/>
<dbReference type="OrthoDB" id="9782201at2"/>
<dbReference type="Proteomes" id="UP000000815">
    <property type="component" value="Chromosome"/>
</dbReference>
<dbReference type="Proteomes" id="UP000001019">
    <property type="component" value="Chromosome"/>
</dbReference>
<dbReference type="Proteomes" id="UP000002490">
    <property type="component" value="Chromosome"/>
</dbReference>
<dbReference type="GO" id="GO:0043531">
    <property type="term" value="F:ADP binding"/>
    <property type="evidence" value="ECO:0007669"/>
    <property type="project" value="UniProtKB-UniRule"/>
</dbReference>
<dbReference type="GO" id="GO:0005524">
    <property type="term" value="F:ATP binding"/>
    <property type="evidence" value="ECO:0007669"/>
    <property type="project" value="InterPro"/>
</dbReference>
<dbReference type="GO" id="GO:0003677">
    <property type="term" value="F:DNA binding"/>
    <property type="evidence" value="ECO:0007669"/>
    <property type="project" value="InterPro"/>
</dbReference>
<dbReference type="GO" id="GO:0016776">
    <property type="term" value="F:phosphotransferase activity, phosphate group as acceptor"/>
    <property type="evidence" value="ECO:0007669"/>
    <property type="project" value="UniProtKB-UniRule"/>
</dbReference>
<dbReference type="GO" id="GO:0004674">
    <property type="term" value="F:protein serine/threonine kinase activity"/>
    <property type="evidence" value="ECO:0007669"/>
    <property type="project" value="UniProtKB-UniRule"/>
</dbReference>
<dbReference type="GO" id="GO:0006355">
    <property type="term" value="P:regulation of DNA-templated transcription"/>
    <property type="evidence" value="ECO:0007669"/>
    <property type="project" value="InterPro"/>
</dbReference>
<dbReference type="HAMAP" id="MF_01062">
    <property type="entry name" value="PSRP"/>
    <property type="match status" value="1"/>
</dbReference>
<dbReference type="InterPro" id="IPR005177">
    <property type="entry name" value="Kinase-pyrophosphorylase"/>
</dbReference>
<dbReference type="InterPro" id="IPR026530">
    <property type="entry name" value="PSRP"/>
</dbReference>
<dbReference type="InterPro" id="IPR008917">
    <property type="entry name" value="TF_DNA-bd_sf"/>
</dbReference>
<dbReference type="NCBIfam" id="NF003742">
    <property type="entry name" value="PRK05339.1"/>
    <property type="match status" value="1"/>
</dbReference>
<dbReference type="PANTHER" id="PTHR31756">
    <property type="entry name" value="PYRUVATE, PHOSPHATE DIKINASE REGULATORY PROTEIN 1, CHLOROPLASTIC"/>
    <property type="match status" value="1"/>
</dbReference>
<dbReference type="PANTHER" id="PTHR31756:SF3">
    <property type="entry name" value="PYRUVATE, PHOSPHATE DIKINASE REGULATORY PROTEIN 1, CHLOROPLASTIC"/>
    <property type="match status" value="1"/>
</dbReference>
<dbReference type="Pfam" id="PF03618">
    <property type="entry name" value="Kinase-PPPase"/>
    <property type="match status" value="1"/>
</dbReference>
<dbReference type="SUPFAM" id="SSF47454">
    <property type="entry name" value="A DNA-binding domain in eukaryotic transcription factors"/>
    <property type="match status" value="1"/>
</dbReference>
<gene>
    <name type="ordered locus">YPO2410</name>
    <name type="ordered locus">y1929</name>
    <name type="ordered locus">YP_2197</name>
</gene>
<feature type="chain" id="PRO_0000196749" description="Putative phosphoenolpyruvate synthase regulatory protein">
    <location>
        <begin position="1"/>
        <end position="273"/>
    </location>
</feature>
<feature type="binding site" evidence="1">
    <location>
        <begin position="153"/>
        <end position="160"/>
    </location>
    <ligand>
        <name>ADP</name>
        <dbReference type="ChEBI" id="CHEBI:456216"/>
    </ligand>
</feature>
<reference key="1">
    <citation type="journal article" date="2001" name="Nature">
        <title>Genome sequence of Yersinia pestis, the causative agent of plague.</title>
        <authorList>
            <person name="Parkhill J."/>
            <person name="Wren B.W."/>
            <person name="Thomson N.R."/>
            <person name="Titball R.W."/>
            <person name="Holden M.T.G."/>
            <person name="Prentice M.B."/>
            <person name="Sebaihia M."/>
            <person name="James K.D."/>
            <person name="Churcher C.M."/>
            <person name="Mungall K.L."/>
            <person name="Baker S."/>
            <person name="Basham D."/>
            <person name="Bentley S.D."/>
            <person name="Brooks K."/>
            <person name="Cerdeno-Tarraga A.-M."/>
            <person name="Chillingworth T."/>
            <person name="Cronin A."/>
            <person name="Davies R.M."/>
            <person name="Davis P."/>
            <person name="Dougan G."/>
            <person name="Feltwell T."/>
            <person name="Hamlin N."/>
            <person name="Holroyd S."/>
            <person name="Jagels K."/>
            <person name="Karlyshev A.V."/>
            <person name="Leather S."/>
            <person name="Moule S."/>
            <person name="Oyston P.C.F."/>
            <person name="Quail M.A."/>
            <person name="Rutherford K.M."/>
            <person name="Simmonds M."/>
            <person name="Skelton J."/>
            <person name="Stevens K."/>
            <person name="Whitehead S."/>
            <person name="Barrell B.G."/>
        </authorList>
    </citation>
    <scope>NUCLEOTIDE SEQUENCE [LARGE SCALE GENOMIC DNA]</scope>
    <source>
        <strain>CO-92 / Biovar Orientalis</strain>
    </source>
</reference>
<reference key="2">
    <citation type="journal article" date="2002" name="J. Bacteriol.">
        <title>Genome sequence of Yersinia pestis KIM.</title>
        <authorList>
            <person name="Deng W."/>
            <person name="Burland V."/>
            <person name="Plunkett G. III"/>
            <person name="Boutin A."/>
            <person name="Mayhew G.F."/>
            <person name="Liss P."/>
            <person name="Perna N.T."/>
            <person name="Rose D.J."/>
            <person name="Mau B."/>
            <person name="Zhou S."/>
            <person name="Schwartz D.C."/>
            <person name="Fetherston J.D."/>
            <person name="Lindler L.E."/>
            <person name="Brubaker R.R."/>
            <person name="Plano G.V."/>
            <person name="Straley S.C."/>
            <person name="McDonough K.A."/>
            <person name="Nilles M.L."/>
            <person name="Matson J.S."/>
            <person name="Blattner F.R."/>
            <person name="Perry R.D."/>
        </authorList>
    </citation>
    <scope>NUCLEOTIDE SEQUENCE [LARGE SCALE GENOMIC DNA]</scope>
    <source>
        <strain>KIM10+ / Biovar Mediaevalis</strain>
    </source>
</reference>
<reference key="3">
    <citation type="journal article" date="2004" name="DNA Res.">
        <title>Complete genome sequence of Yersinia pestis strain 91001, an isolate avirulent to humans.</title>
        <authorList>
            <person name="Song Y."/>
            <person name="Tong Z."/>
            <person name="Wang J."/>
            <person name="Wang L."/>
            <person name="Guo Z."/>
            <person name="Han Y."/>
            <person name="Zhang J."/>
            <person name="Pei D."/>
            <person name="Zhou D."/>
            <person name="Qin H."/>
            <person name="Pang X."/>
            <person name="Han Y."/>
            <person name="Zhai J."/>
            <person name="Li M."/>
            <person name="Cui B."/>
            <person name="Qi Z."/>
            <person name="Jin L."/>
            <person name="Dai R."/>
            <person name="Chen F."/>
            <person name="Li S."/>
            <person name="Ye C."/>
            <person name="Du Z."/>
            <person name="Lin W."/>
            <person name="Wang J."/>
            <person name="Yu J."/>
            <person name="Yang H."/>
            <person name="Wang J."/>
            <person name="Huang P."/>
            <person name="Yang R."/>
        </authorList>
    </citation>
    <scope>NUCLEOTIDE SEQUENCE [LARGE SCALE GENOMIC DNA]</scope>
    <source>
        <strain>91001 / Biovar Mediaevalis</strain>
    </source>
</reference>
<protein>
    <recommendedName>
        <fullName evidence="1">Putative phosphoenolpyruvate synthase regulatory protein</fullName>
        <shortName evidence="1">PEP synthase regulatory protein</shortName>
        <shortName evidence="1">PSRP</shortName>
        <ecNumber evidence="1">2.7.11.33</ecNumber>
        <ecNumber evidence="1">2.7.4.28</ecNumber>
    </recommendedName>
    <alternativeName>
        <fullName evidence="1">Pyruvate, water dikinase regulatory protein</fullName>
    </alternativeName>
</protein>
<organism>
    <name type="scientific">Yersinia pestis</name>
    <dbReference type="NCBI Taxonomy" id="632"/>
    <lineage>
        <taxon>Bacteria</taxon>
        <taxon>Pseudomonadati</taxon>
        <taxon>Pseudomonadota</taxon>
        <taxon>Gammaproteobacteria</taxon>
        <taxon>Enterobacterales</taxon>
        <taxon>Yersiniaceae</taxon>
        <taxon>Yersinia</taxon>
    </lineage>
</organism>
<sequence>MERCVFYISDGTAITAEVLGHAVLSQFPINVTTFTLPFVENAARAQSVCKQINEIYQDTGVRPLVFYSIISLEVREIIQRSEGFCQDIVQALVAPLQGELGVPPQPVLNRTHGLTESNLDKYDARIAAIDYALAHDDGISLRNLDQAQVILLGVSRCGKTPTSLYLAMQFGIRAANYPFIADDMDNLQLPAALKPFQHKLFGLTINPERLAAIREERRENSRYASLRQCRMEVGEVEALFRKNQIRYLNSTNYSVEEISTKILDILGMSRRMF</sequence>
<name>PSRP_YERPE</name>
<comment type="function">
    <text evidence="1">Bifunctional serine/threonine kinase and phosphorylase involved in the regulation of the phosphoenolpyruvate synthase (PEPS) by catalyzing its phosphorylation/dephosphorylation.</text>
</comment>
<comment type="catalytic activity">
    <reaction evidence="1">
        <text>[pyruvate, water dikinase] + ADP = [pyruvate, water dikinase]-phosphate + AMP + H(+)</text>
        <dbReference type="Rhea" id="RHEA:46020"/>
        <dbReference type="Rhea" id="RHEA-COMP:11425"/>
        <dbReference type="Rhea" id="RHEA-COMP:11426"/>
        <dbReference type="ChEBI" id="CHEBI:15378"/>
        <dbReference type="ChEBI" id="CHEBI:43176"/>
        <dbReference type="ChEBI" id="CHEBI:68546"/>
        <dbReference type="ChEBI" id="CHEBI:456215"/>
        <dbReference type="ChEBI" id="CHEBI:456216"/>
        <dbReference type="EC" id="2.7.11.33"/>
    </reaction>
</comment>
<comment type="catalytic activity">
    <reaction evidence="1">
        <text>[pyruvate, water dikinase]-phosphate + phosphate + H(+) = [pyruvate, water dikinase] + diphosphate</text>
        <dbReference type="Rhea" id="RHEA:48580"/>
        <dbReference type="Rhea" id="RHEA-COMP:11425"/>
        <dbReference type="Rhea" id="RHEA-COMP:11426"/>
        <dbReference type="ChEBI" id="CHEBI:15378"/>
        <dbReference type="ChEBI" id="CHEBI:33019"/>
        <dbReference type="ChEBI" id="CHEBI:43176"/>
        <dbReference type="ChEBI" id="CHEBI:43474"/>
        <dbReference type="ChEBI" id="CHEBI:68546"/>
        <dbReference type="EC" id="2.7.4.28"/>
    </reaction>
</comment>
<comment type="similarity">
    <text evidence="1">Belongs to the pyruvate, phosphate/water dikinase regulatory protein family. PSRP subfamily.</text>
</comment>
<accession>Q8ZDY4</accession>
<accession>Q0WEB3</accession>
<evidence type="ECO:0000255" key="1">
    <source>
        <dbReference type="HAMAP-Rule" id="MF_01062"/>
    </source>
</evidence>
<proteinExistence type="inferred from homology"/>
<keyword id="KW-0418">Kinase</keyword>
<keyword id="KW-0547">Nucleotide-binding</keyword>
<keyword id="KW-1185">Reference proteome</keyword>
<keyword id="KW-0723">Serine/threonine-protein kinase</keyword>
<keyword id="KW-0808">Transferase</keyword>